<reference key="1">
    <citation type="journal article" date="1997" name="J. Biol. Chem.">
        <title>Cloning and expression of a novel mammalian homolog of Drosophila transient receptor potential (Trp) involved in calcium entry secondary to activation of receptors coupled by the Gq class of G protein.</title>
        <authorList>
            <person name="Boulay G."/>
            <person name="Zhu X."/>
            <person name="Peyton M."/>
            <person name="Jiang M."/>
            <person name="Hurst R."/>
            <person name="Stefani E."/>
            <person name="Birnbaumer L."/>
        </authorList>
    </citation>
    <scope>NUCLEOTIDE SEQUENCE [MRNA]</scope>
    <scope>FUNCTION</scope>
    <scope>TRANSPORTER ACTIVITY</scope>
    <scope>TISSUE SPECIFICITY</scope>
    <source>
        <tissue>Brain</tissue>
    </source>
</reference>
<reference key="2">
    <citation type="journal article" date="1999" name="Oncogene">
        <title>Search for oncogenic regulators in an autocrine tumor model using differential display PCR: identification of novel candidate genes including the calcium channel mtrp6.</title>
        <authorList>
            <person name="Buess M."/>
            <person name="Engler O."/>
            <person name="Hirsch H.H."/>
            <person name="Moroni C."/>
        </authorList>
    </citation>
    <scope>NUCLEOTIDE SEQUENCE [MRNA]</scope>
    <source>
        <strain>DBA/2J</strain>
    </source>
</reference>
<reference key="3">
    <citation type="submission" date="2005-07" db="EMBL/GenBank/DDBJ databases">
        <authorList>
            <person name="Mural R.J."/>
            <person name="Adams M.D."/>
            <person name="Myers E.W."/>
            <person name="Smith H.O."/>
            <person name="Venter J.C."/>
        </authorList>
    </citation>
    <scope>NUCLEOTIDE SEQUENCE [LARGE SCALE GENOMIC DNA]</scope>
</reference>
<reference key="4">
    <citation type="journal article" date="2004" name="Genome Res.">
        <title>The status, quality, and expansion of the NIH full-length cDNA project: the Mammalian Gene Collection (MGC).</title>
        <authorList>
            <consortium name="The MGC Project Team"/>
        </authorList>
    </citation>
    <scope>NUCLEOTIDE SEQUENCE [LARGE SCALE MRNA]</scope>
    <source>
        <tissue>Embryo</tissue>
    </source>
</reference>
<reference key="5">
    <citation type="journal article" date="1996" name="Cell">
        <title>trp, a novel mammalian gene family essential for agonist-activated capacitative Ca2+ entry.</title>
        <authorList>
            <person name="Zhu X."/>
            <person name="Jiang M."/>
            <person name="Peyton M."/>
            <person name="Boulay G."/>
            <person name="Hurst R."/>
            <person name="Stefani E."/>
            <person name="Birnbaumer L."/>
        </authorList>
    </citation>
    <scope>NUCLEOTIDE SEQUENCE [MRNA] OF 631-739</scope>
    <source>
        <tissue>Brain</tissue>
    </source>
</reference>
<reference key="6">
    <citation type="journal article" date="2004" name="J. Biol. Chem.">
        <title>Regulation of TRPC6 channel activity by tyrosine phosphorylation.</title>
        <authorList>
            <person name="Hisatsune C."/>
            <person name="Kuroda Y."/>
            <person name="Nakamura K."/>
            <person name="Inoue T."/>
            <person name="Nakamura T."/>
            <person name="Michikawa T."/>
            <person name="Mizutani A."/>
            <person name="Mikoshiba K."/>
        </authorList>
    </citation>
    <scope>PHOSPHORYLATION BY FYN</scope>
</reference>
<reference key="7">
    <citation type="journal article" date="2010" name="Cell">
        <title>A tissue-specific atlas of mouse protein phosphorylation and expression.</title>
        <authorList>
            <person name="Huttlin E.L."/>
            <person name="Jedrychowski M.P."/>
            <person name="Elias J.E."/>
            <person name="Goswami T."/>
            <person name="Rad R."/>
            <person name="Beausoleil S.A."/>
            <person name="Villen J."/>
            <person name="Haas W."/>
            <person name="Sowa M.E."/>
            <person name="Gygi S.P."/>
        </authorList>
    </citation>
    <scope>PHOSPHORYLATION [LARGE SCALE ANALYSIS] AT SER-814</scope>
    <scope>IDENTIFICATION BY MASS SPECTROMETRY [LARGE SCALE ANALYSIS]</scope>
    <source>
        <tissue>Lung</tissue>
    </source>
</reference>
<feature type="chain" id="PRO_0000215323" description="Short transient receptor potential channel 6">
    <location>
        <begin position="1"/>
        <end position="930"/>
    </location>
</feature>
<feature type="topological domain" description="Cytoplasmic" evidence="2">
    <location>
        <begin position="1"/>
        <end position="437"/>
    </location>
</feature>
<feature type="transmembrane region" description="Helical" evidence="2">
    <location>
        <begin position="438"/>
        <end position="458"/>
    </location>
</feature>
<feature type="topological domain" description="Extracellular" evidence="2">
    <location>
        <begin position="459"/>
        <end position="486"/>
    </location>
</feature>
<feature type="transmembrane region" description="Helical" evidence="2">
    <location>
        <begin position="487"/>
        <end position="507"/>
    </location>
</feature>
<feature type="topological domain" description="Cytoplasmic" evidence="2">
    <location>
        <begin position="508"/>
        <end position="520"/>
    </location>
</feature>
<feature type="transmembrane region" description="Helical" evidence="2">
    <location>
        <begin position="521"/>
        <end position="541"/>
    </location>
</feature>
<feature type="topological domain" description="Extracellular" evidence="2">
    <location>
        <begin position="542"/>
        <end position="591"/>
    </location>
</feature>
<feature type="transmembrane region" description="Helical" evidence="2">
    <location>
        <begin position="592"/>
        <end position="612"/>
    </location>
</feature>
<feature type="topological domain" description="Cytoplasmic" evidence="2">
    <location>
        <begin position="613"/>
        <end position="635"/>
    </location>
</feature>
<feature type="transmembrane region" description="Helical" evidence="2">
    <location>
        <begin position="636"/>
        <end position="656"/>
    </location>
</feature>
<feature type="topological domain" description="Extracellular" evidence="2">
    <location>
        <begin position="657"/>
        <end position="705"/>
    </location>
</feature>
<feature type="transmembrane region" description="Helical" evidence="2">
    <location>
        <begin position="706"/>
        <end position="726"/>
    </location>
</feature>
<feature type="topological domain" description="Cytoplasmic" evidence="2">
    <location>
        <begin position="727"/>
        <end position="930"/>
    </location>
</feature>
<feature type="repeat" description="ANK 1">
    <location>
        <begin position="96"/>
        <end position="125"/>
    </location>
</feature>
<feature type="repeat" description="ANK 2">
    <location>
        <begin position="131"/>
        <end position="160"/>
    </location>
</feature>
<feature type="repeat" description="ANK 3">
    <location>
        <begin position="162"/>
        <end position="188"/>
    </location>
</feature>
<feature type="repeat" description="ANK 4">
    <location>
        <begin position="217"/>
        <end position="246"/>
    </location>
</feature>
<feature type="region of interest" description="Disordered" evidence="3">
    <location>
        <begin position="1"/>
        <end position="27"/>
    </location>
</feature>
<feature type="modified residue" description="Phosphoserine" evidence="9">
    <location>
        <position position="814"/>
    </location>
</feature>
<feature type="glycosylation site" description="N-linked (GlcNAc...) asparagine" evidence="2">
    <location>
        <position position="560"/>
    </location>
</feature>
<feature type="sequence conflict" description="In Ref. 2." evidence="7" ref="2">
    <location>
        <begin position="3"/>
        <end position="56"/>
    </location>
</feature>
<feature type="sequence conflict" description="In Ref. 1; AAC06146." evidence="7" ref="1">
    <original>A</original>
    <variation>V</variation>
    <location>
        <position position="105"/>
    </location>
</feature>
<feature type="sequence conflict" description="In Ref. 1; AAC06146." evidence="7" ref="1">
    <original>R</original>
    <variation>W</variation>
    <location>
        <position position="114"/>
    </location>
</feature>
<feature type="sequence conflict" description="In Ref. 2; AAC64394." evidence="7" ref="2">
    <original>N</original>
    <variation>D</variation>
    <location>
        <position position="134"/>
    </location>
</feature>
<feature type="sequence conflict" description="In Ref. 1; AAC06146." evidence="7" ref="1">
    <original>A</original>
    <variation>S</variation>
    <location>
        <position position="184"/>
    </location>
</feature>
<feature type="sequence conflict" description="In Ref. 1; AAC06146." evidence="7" ref="1">
    <original>Y</original>
    <variation>D</variation>
    <location>
        <position position="371"/>
    </location>
</feature>
<feature type="sequence conflict" description="In Ref. 1; AAC06146." evidence="7" ref="1">
    <original>RG</original>
    <variation>PR</variation>
    <location>
        <begin position="436"/>
        <end position="437"/>
    </location>
</feature>
<feature type="sequence conflict" description="In Ref. 1; AAC06146." evidence="7" ref="1">
    <original>T</original>
    <variation>S</variation>
    <location>
        <position position="905"/>
    </location>
</feature>
<keyword id="KW-0002">3D-structure</keyword>
<keyword id="KW-0040">ANK repeat</keyword>
<keyword id="KW-0106">Calcium</keyword>
<keyword id="KW-0107">Calcium channel</keyword>
<keyword id="KW-0109">Calcium transport</keyword>
<keyword id="KW-1003">Cell membrane</keyword>
<keyword id="KW-0325">Glycoprotein</keyword>
<keyword id="KW-0407">Ion channel</keyword>
<keyword id="KW-0406">Ion transport</keyword>
<keyword id="KW-0472">Membrane</keyword>
<keyword id="KW-0597">Phosphoprotein</keyword>
<keyword id="KW-1185">Reference proteome</keyword>
<keyword id="KW-0677">Repeat</keyword>
<keyword id="KW-0812">Transmembrane</keyword>
<keyword id="KW-1133">Transmembrane helix</keyword>
<keyword id="KW-0813">Transport</keyword>
<accession>Q61143</accession>
<accession>B9EIW2</accession>
<accession>Q9Z2J1</accession>
<sequence length="930" mass="106681">MSQSPRFVTRRGGSLKAAPGAGTRRNESQDYLLMDELGDDGYPQLPLPPYGYYPSFRGNENRLTHRRQTILREKGRRLANRGPAYMFNDHSTSLSIEEERFLDAAEYGNIPVVRKMLEECHSLNVNCVDYMGQNALQLAVANEHLEITELLLKKENLSRVGDALLLAISKGYVRIVEAILNHPAFAEGKRLATSPSQSELQQDDFYAYDEDGTRFSHDVTPIILAAHCQEYEIVHTLLRKGARIERPHDYFCKCTECSQKQKHDSFSHSRSRINAYKGLASPAYLSLSSEDPVMTALELSNELAVLANIEKEFKNDYRKLSMQCKDFVVGLLDLCRNTEEVEAILNGDAETRQPGDFGRPNLSRLKLAIKYEVKKFVAHPNCQQQLLSIWYENLSGLRQQTMAVKFLVVLAVAIGLPFLALIYWCAPCSKMGKILRGPFMKFVAHAASFTIFLGLLVMNAADRFEGTKLLPNETSTDNARQLFRMKTSCFSWMEMLIISWVIGMIWAECKEIWTQGPKEYLFELWNMLDFGMLAIFAASFIARFMAFWHASKAQSIIDANDTLKDLTKVTLGDNVKYYNLARIKWDPTDPQIISEGLYAIAVVLSFSRIAYILPANESFGPLQISLGRTVKDIFKFMVIFIMVFVAFMIGMFNLYSYYIGAKQNEAFTTVEESFKTLFWAIFGLSEVKSVVINYNHKFIENIGYVLYGVYNVTMVIVLLNMLIAMINSSFQEIEDDADVEWKFARAKLWFSYFEEGRTLPVPFNLVPSPKSLLYLLLKFKKWMCELIQGQKQGFQEDAEMNKRNEEKKFGISGSHEDLSKFSLDKNQLAHNKQSSTRSSEDYHLNSFSNPPRQYQKIMKRLIKRYVLQAQIDKESDEVNEGELKEIKQDISSLRYELLEEKSQNTEDLAELIRKLGERLSLEPKLEESRR</sequence>
<dbReference type="EMBL" id="U49069">
    <property type="protein sequence ID" value="AAC06146.1"/>
    <property type="molecule type" value="mRNA"/>
</dbReference>
<dbReference type="EMBL" id="AF057748">
    <property type="protein sequence ID" value="AAC64394.1"/>
    <property type="molecule type" value="mRNA"/>
</dbReference>
<dbReference type="EMBL" id="CH466522">
    <property type="protein sequence ID" value="EDL24958.1"/>
    <property type="molecule type" value="Genomic_DNA"/>
</dbReference>
<dbReference type="EMBL" id="BC141131">
    <property type="protein sequence ID" value="AAI41132.1"/>
    <property type="molecule type" value="mRNA"/>
</dbReference>
<dbReference type="CCDS" id="CCDS22815.1"/>
<dbReference type="RefSeq" id="NP_001416052.1">
    <property type="nucleotide sequence ID" value="NM_001429123.1"/>
</dbReference>
<dbReference type="RefSeq" id="NP_038866.2">
    <property type="nucleotide sequence ID" value="NM_013838.3"/>
</dbReference>
<dbReference type="RefSeq" id="XP_006509913.1">
    <property type="nucleotide sequence ID" value="XM_006509850.4"/>
</dbReference>
<dbReference type="PDB" id="6CV9">
    <property type="method" value="EM"/>
    <property type="resolution" value="3.80 A"/>
    <property type="chains" value="A/B/C/D=94-930"/>
</dbReference>
<dbReference type="PDBsum" id="6CV9"/>
<dbReference type="EMDB" id="EMD-7637"/>
<dbReference type="SMR" id="Q61143"/>
<dbReference type="BioGRID" id="204332">
    <property type="interactions" value="3"/>
</dbReference>
<dbReference type="DIP" id="DIP-60893N"/>
<dbReference type="FunCoup" id="Q61143">
    <property type="interactions" value="181"/>
</dbReference>
<dbReference type="IntAct" id="Q61143">
    <property type="interactions" value="3"/>
</dbReference>
<dbReference type="STRING" id="10090.ENSMUSP00000057965"/>
<dbReference type="BindingDB" id="Q61143"/>
<dbReference type="ChEMBL" id="CHEMBL1795081"/>
<dbReference type="GuidetoPHARMACOLOGY" id="491"/>
<dbReference type="GlyCosmos" id="Q61143">
    <property type="glycosylation" value="1 site, No reported glycans"/>
</dbReference>
<dbReference type="GlyGen" id="Q61143">
    <property type="glycosylation" value="2 sites, 1 N-linked glycan (1 site)"/>
</dbReference>
<dbReference type="iPTMnet" id="Q61143"/>
<dbReference type="PhosphoSitePlus" id="Q61143"/>
<dbReference type="PaxDb" id="10090-ENSMUSP00000057965"/>
<dbReference type="ProteomicsDB" id="300018"/>
<dbReference type="Antibodypedia" id="17956">
    <property type="antibodies" value="418 antibodies from 39 providers"/>
</dbReference>
<dbReference type="DNASU" id="22068"/>
<dbReference type="Ensembl" id="ENSMUST00000050433.8">
    <property type="protein sequence ID" value="ENSMUSP00000057965.7"/>
    <property type="gene ID" value="ENSMUSG00000031997.10"/>
</dbReference>
<dbReference type="GeneID" id="22068"/>
<dbReference type="KEGG" id="mmu:22068"/>
<dbReference type="UCSC" id="uc009odl.1">
    <property type="organism name" value="mouse"/>
</dbReference>
<dbReference type="AGR" id="MGI:109523"/>
<dbReference type="CTD" id="7225"/>
<dbReference type="MGI" id="MGI:109523">
    <property type="gene designation" value="Trpc6"/>
</dbReference>
<dbReference type="VEuPathDB" id="HostDB:ENSMUSG00000031997"/>
<dbReference type="eggNOG" id="KOG3609">
    <property type="taxonomic scope" value="Eukaryota"/>
</dbReference>
<dbReference type="GeneTree" id="ENSGT01060000248588"/>
<dbReference type="HOGENOM" id="CLU_005716_4_2_1"/>
<dbReference type="InParanoid" id="Q61143"/>
<dbReference type="OMA" id="LLEPWNM"/>
<dbReference type="OrthoDB" id="2373987at2759"/>
<dbReference type="PhylomeDB" id="Q61143"/>
<dbReference type="TreeFam" id="TF313147"/>
<dbReference type="Reactome" id="R-MMU-114508">
    <property type="pathway name" value="Effects of PIP2 hydrolysis"/>
</dbReference>
<dbReference type="Reactome" id="R-MMU-139853">
    <property type="pathway name" value="Elevation of cytosolic Ca2+ levels"/>
</dbReference>
<dbReference type="Reactome" id="R-MMU-3295583">
    <property type="pathway name" value="TRP channels"/>
</dbReference>
<dbReference type="BioGRID-ORCS" id="22068">
    <property type="hits" value="3 hits in 76 CRISPR screens"/>
</dbReference>
<dbReference type="ChiTaRS" id="Trpc6">
    <property type="organism name" value="mouse"/>
</dbReference>
<dbReference type="PRO" id="PR:Q61143"/>
<dbReference type="Proteomes" id="UP000000589">
    <property type="component" value="Chromosome 9"/>
</dbReference>
<dbReference type="RNAct" id="Q61143">
    <property type="molecule type" value="protein"/>
</dbReference>
<dbReference type="Bgee" id="ENSMUSG00000031997">
    <property type="expression patterns" value="Expressed in lumbar dorsal root ganglion and 81 other cell types or tissues"/>
</dbReference>
<dbReference type="ExpressionAtlas" id="Q61143">
    <property type="expression patterns" value="baseline and differential"/>
</dbReference>
<dbReference type="GO" id="GO:0005737">
    <property type="term" value="C:cytoplasm"/>
    <property type="evidence" value="ECO:0007669"/>
    <property type="project" value="Ensembl"/>
</dbReference>
<dbReference type="GO" id="GO:0005886">
    <property type="term" value="C:plasma membrane"/>
    <property type="evidence" value="ECO:0000314"/>
    <property type="project" value="MGI"/>
</dbReference>
<dbReference type="GO" id="GO:0036057">
    <property type="term" value="C:slit diaphragm"/>
    <property type="evidence" value="ECO:0000314"/>
    <property type="project" value="MGI"/>
</dbReference>
<dbReference type="GO" id="GO:0003779">
    <property type="term" value="F:actin binding"/>
    <property type="evidence" value="ECO:0007669"/>
    <property type="project" value="Ensembl"/>
</dbReference>
<dbReference type="GO" id="GO:0042805">
    <property type="term" value="F:actinin binding"/>
    <property type="evidence" value="ECO:0007669"/>
    <property type="project" value="Ensembl"/>
</dbReference>
<dbReference type="GO" id="GO:0051117">
    <property type="term" value="F:ATPase binding"/>
    <property type="evidence" value="ECO:0007669"/>
    <property type="project" value="Ensembl"/>
</dbReference>
<dbReference type="GO" id="GO:0005262">
    <property type="term" value="F:calcium channel activity"/>
    <property type="evidence" value="ECO:0000314"/>
    <property type="project" value="UniProtKB"/>
</dbReference>
<dbReference type="GO" id="GO:0030276">
    <property type="term" value="F:clathrin binding"/>
    <property type="evidence" value="ECO:0007669"/>
    <property type="project" value="Ensembl"/>
</dbReference>
<dbReference type="GO" id="GO:0070679">
    <property type="term" value="F:inositol 1,4,5 trisphosphate binding"/>
    <property type="evidence" value="ECO:0007669"/>
    <property type="project" value="Ensembl"/>
</dbReference>
<dbReference type="GO" id="GO:0005216">
    <property type="term" value="F:monoatomic ion channel activity"/>
    <property type="evidence" value="ECO:0000314"/>
    <property type="project" value="MGI"/>
</dbReference>
<dbReference type="GO" id="GO:0042803">
    <property type="term" value="F:protein homodimerization activity"/>
    <property type="evidence" value="ECO:0000250"/>
    <property type="project" value="UniProtKB"/>
</dbReference>
<dbReference type="GO" id="GO:0015279">
    <property type="term" value="F:store-operated calcium channel activity"/>
    <property type="evidence" value="ECO:0000314"/>
    <property type="project" value="MGI"/>
</dbReference>
<dbReference type="GO" id="GO:0070301">
    <property type="term" value="P:cellular response to hydrogen peroxide"/>
    <property type="evidence" value="ECO:0007669"/>
    <property type="project" value="Ensembl"/>
</dbReference>
<dbReference type="GO" id="GO:0071456">
    <property type="term" value="P:cellular response to hypoxia"/>
    <property type="evidence" value="ECO:0007669"/>
    <property type="project" value="Ensembl"/>
</dbReference>
<dbReference type="GO" id="GO:0050774">
    <property type="term" value="P:negative regulation of dendrite morphogenesis"/>
    <property type="evidence" value="ECO:0007669"/>
    <property type="project" value="Ensembl"/>
</dbReference>
<dbReference type="GO" id="GO:0030182">
    <property type="term" value="P:neuron differentiation"/>
    <property type="evidence" value="ECO:0007669"/>
    <property type="project" value="Ensembl"/>
</dbReference>
<dbReference type="GO" id="GO:0051928">
    <property type="term" value="P:positive regulation of calcium ion transport"/>
    <property type="evidence" value="ECO:0000266"/>
    <property type="project" value="MGI"/>
</dbReference>
<dbReference type="GO" id="GO:0007204">
    <property type="term" value="P:positive regulation of cytosolic calcium ion concentration"/>
    <property type="evidence" value="ECO:0000314"/>
    <property type="project" value="MGI"/>
</dbReference>
<dbReference type="GO" id="GO:0045666">
    <property type="term" value="P:positive regulation of neuron differentiation"/>
    <property type="evidence" value="ECO:0007669"/>
    <property type="project" value="Ensembl"/>
</dbReference>
<dbReference type="FunFam" id="1.25.40.20:FF:000157">
    <property type="entry name" value="short transient receptor potential channel 6 isoform X1"/>
    <property type="match status" value="1"/>
</dbReference>
<dbReference type="FunFam" id="1.10.287.70:FF:000041">
    <property type="entry name" value="Transient receptor potential cation channel subfamily C member 7"/>
    <property type="match status" value="1"/>
</dbReference>
<dbReference type="Gene3D" id="1.10.287.70">
    <property type="match status" value="1"/>
</dbReference>
<dbReference type="Gene3D" id="1.25.40.20">
    <property type="entry name" value="Ankyrin repeat-containing domain"/>
    <property type="match status" value="1"/>
</dbReference>
<dbReference type="InterPro" id="IPR002110">
    <property type="entry name" value="Ankyrin_rpt"/>
</dbReference>
<dbReference type="InterPro" id="IPR036770">
    <property type="entry name" value="Ankyrin_rpt-contain_sf"/>
</dbReference>
<dbReference type="InterPro" id="IPR005821">
    <property type="entry name" value="Ion_trans_dom"/>
</dbReference>
<dbReference type="InterPro" id="IPR013555">
    <property type="entry name" value="TRP_dom"/>
</dbReference>
<dbReference type="InterPro" id="IPR005462">
    <property type="entry name" value="TRPC6_channel"/>
</dbReference>
<dbReference type="InterPro" id="IPR002153">
    <property type="entry name" value="TRPC_channel"/>
</dbReference>
<dbReference type="NCBIfam" id="TIGR00870">
    <property type="entry name" value="trp"/>
    <property type="match status" value="1"/>
</dbReference>
<dbReference type="PANTHER" id="PTHR10117:SF7">
    <property type="entry name" value="SHORT TRANSIENT RECEPTOR POTENTIAL CHANNEL 6"/>
    <property type="match status" value="1"/>
</dbReference>
<dbReference type="PANTHER" id="PTHR10117">
    <property type="entry name" value="TRANSIENT RECEPTOR POTENTIAL CHANNEL"/>
    <property type="match status" value="1"/>
</dbReference>
<dbReference type="Pfam" id="PF12796">
    <property type="entry name" value="Ank_2"/>
    <property type="match status" value="1"/>
</dbReference>
<dbReference type="Pfam" id="PF00520">
    <property type="entry name" value="Ion_trans"/>
    <property type="match status" value="1"/>
</dbReference>
<dbReference type="Pfam" id="PF08344">
    <property type="entry name" value="TRP_2"/>
    <property type="match status" value="1"/>
</dbReference>
<dbReference type="PRINTS" id="PR01097">
    <property type="entry name" value="TRNSRECEPTRP"/>
</dbReference>
<dbReference type="PRINTS" id="PR01647">
    <property type="entry name" value="TRPCHANNEL6"/>
</dbReference>
<dbReference type="SMART" id="SM00248">
    <property type="entry name" value="ANK"/>
    <property type="match status" value="3"/>
</dbReference>
<dbReference type="SMART" id="SM01420">
    <property type="entry name" value="TRP_2"/>
    <property type="match status" value="1"/>
</dbReference>
<dbReference type="SUPFAM" id="SSF48403">
    <property type="entry name" value="Ankyrin repeat"/>
    <property type="match status" value="1"/>
</dbReference>
<dbReference type="PROSITE" id="PS50297">
    <property type="entry name" value="ANK_REP_REGION"/>
    <property type="match status" value="2"/>
</dbReference>
<dbReference type="PROSITE" id="PS50088">
    <property type="entry name" value="ANK_REPEAT"/>
    <property type="match status" value="1"/>
</dbReference>
<evidence type="ECO:0000250" key="1">
    <source>
        <dbReference type="UniProtKB" id="Q9Y210"/>
    </source>
</evidence>
<evidence type="ECO:0000255" key="2"/>
<evidence type="ECO:0000256" key="3">
    <source>
        <dbReference type="SAM" id="MobiDB-lite"/>
    </source>
</evidence>
<evidence type="ECO:0000269" key="4">
    <source>
    </source>
</evidence>
<evidence type="ECO:0000269" key="5">
    <source>
    </source>
</evidence>
<evidence type="ECO:0000303" key="6">
    <source>
    </source>
</evidence>
<evidence type="ECO:0000305" key="7"/>
<evidence type="ECO:0000312" key="8">
    <source>
        <dbReference type="MGI" id="MGI:109523"/>
    </source>
</evidence>
<evidence type="ECO:0007744" key="9">
    <source>
    </source>
</evidence>
<name>TRPC6_MOUSE</name>
<gene>
    <name evidence="6 8" type="primary">Trpc6</name>
    <name type="synonym">Trp6</name>
    <name type="synonym">Trrp6</name>
</gene>
<protein>
    <recommendedName>
        <fullName evidence="1">Short transient receptor potential channel 6</fullName>
        <shortName evidence="6">TrpC6</shortName>
    </recommendedName>
    <alternativeName>
        <fullName>Calcium entry channel</fullName>
    </alternativeName>
    <alternativeName>
        <fullName>Transient receptor protein 6</fullName>
        <shortName>TRP-6</shortName>
    </alternativeName>
</protein>
<organism>
    <name type="scientific">Mus musculus</name>
    <name type="common">Mouse</name>
    <dbReference type="NCBI Taxonomy" id="10090"/>
    <lineage>
        <taxon>Eukaryota</taxon>
        <taxon>Metazoa</taxon>
        <taxon>Chordata</taxon>
        <taxon>Craniata</taxon>
        <taxon>Vertebrata</taxon>
        <taxon>Euteleostomi</taxon>
        <taxon>Mammalia</taxon>
        <taxon>Eutheria</taxon>
        <taxon>Euarchontoglires</taxon>
        <taxon>Glires</taxon>
        <taxon>Rodentia</taxon>
        <taxon>Myomorpha</taxon>
        <taxon>Muroidea</taxon>
        <taxon>Muridae</taxon>
        <taxon>Murinae</taxon>
        <taxon>Mus</taxon>
        <taxon>Mus</taxon>
    </lineage>
</organism>
<comment type="function">
    <text evidence="1 5">Forms a receptor-activated non-selective calcium permeant cation channel (PubMed:9368034). Probably is operated by a phosphatidylinositol second messenger system activated by receptor tyrosine kinases or G-protein coupled receptors. Activated by diacylglycerol (DAG) in a membrane-delimited fashion, independently of protein kinase C. Seems not to be activated by intracellular calcium store depletion.</text>
</comment>
<comment type="catalytic activity">
    <reaction evidence="5">
        <text>Ca(2+)(in) = Ca(2+)(out)</text>
        <dbReference type="Rhea" id="RHEA:29671"/>
        <dbReference type="ChEBI" id="CHEBI:29108"/>
    </reaction>
</comment>
<comment type="subunit">
    <text evidence="1">Homodimer; forms channel complex. Interacts with MX1 and RNF24.</text>
</comment>
<comment type="interaction">
    <interactant intactId="EBI-15563578">
        <id>Q61143</id>
    </interactant>
    <interactant intactId="EBI-2291476">
        <id>Q96D31</id>
        <label>ORAI1</label>
    </interactant>
    <organismsDiffer>true</organismsDiffer>
    <experiments>2</experiments>
</comment>
<comment type="subcellular location">
    <subcellularLocation>
        <location evidence="1">Cell membrane</location>
        <topology evidence="2">Multi-pass membrane protein</topology>
    </subcellularLocation>
</comment>
<comment type="tissue specificity">
    <text evidence="5">Lung and brain.</text>
</comment>
<comment type="PTM">
    <text evidence="4">Phosphorylated by FYN, leading to an increase of TRPC6 channel activity.</text>
</comment>
<comment type="PTM">
    <text>N-glycosylated.</text>
</comment>
<comment type="similarity">
    <text evidence="7">Belongs to the transient receptor (TC 1.A.4) family. STrpC subfamily. TRPC6 sub-subfamily.</text>
</comment>
<proteinExistence type="evidence at protein level"/>